<gene>
    <name evidence="1" type="primary">argB</name>
    <name type="ordered locus">Syncc9605_0684</name>
</gene>
<keyword id="KW-0028">Amino-acid biosynthesis</keyword>
<keyword id="KW-0055">Arginine biosynthesis</keyword>
<keyword id="KW-0067">ATP-binding</keyword>
<keyword id="KW-0963">Cytoplasm</keyword>
<keyword id="KW-0418">Kinase</keyword>
<keyword id="KW-0547">Nucleotide-binding</keyword>
<keyword id="KW-0808">Transferase</keyword>
<accession>Q3ALS4</accession>
<organism>
    <name type="scientific">Synechococcus sp. (strain CC9605)</name>
    <dbReference type="NCBI Taxonomy" id="110662"/>
    <lineage>
        <taxon>Bacteria</taxon>
        <taxon>Bacillati</taxon>
        <taxon>Cyanobacteriota</taxon>
        <taxon>Cyanophyceae</taxon>
        <taxon>Synechococcales</taxon>
        <taxon>Synechococcaceae</taxon>
        <taxon>Synechococcus</taxon>
    </lineage>
</organism>
<protein>
    <recommendedName>
        <fullName evidence="1">Acetylglutamate kinase</fullName>
        <ecNumber evidence="1">2.7.2.8</ecNumber>
    </recommendedName>
    <alternativeName>
        <fullName evidence="1">N-acetyl-L-glutamate 5-phosphotransferase</fullName>
    </alternativeName>
    <alternativeName>
        <fullName evidence="1">NAG kinase</fullName>
        <shortName evidence="1">NAGK</shortName>
    </alternativeName>
</protein>
<dbReference type="EC" id="2.7.2.8" evidence="1"/>
<dbReference type="EMBL" id="CP000110">
    <property type="protein sequence ID" value="ABB34458.1"/>
    <property type="molecule type" value="Genomic_DNA"/>
</dbReference>
<dbReference type="RefSeq" id="WP_011363686.1">
    <property type="nucleotide sequence ID" value="NC_007516.1"/>
</dbReference>
<dbReference type="SMR" id="Q3ALS4"/>
<dbReference type="STRING" id="110662.Syncc9605_0684"/>
<dbReference type="KEGG" id="syd:Syncc9605_0684"/>
<dbReference type="eggNOG" id="COG0548">
    <property type="taxonomic scope" value="Bacteria"/>
</dbReference>
<dbReference type="HOGENOM" id="CLU_053680_0_0_3"/>
<dbReference type="OrthoDB" id="9803155at2"/>
<dbReference type="UniPathway" id="UPA00068">
    <property type="reaction ID" value="UER00107"/>
</dbReference>
<dbReference type="GO" id="GO:0005737">
    <property type="term" value="C:cytoplasm"/>
    <property type="evidence" value="ECO:0007669"/>
    <property type="project" value="UniProtKB-SubCell"/>
</dbReference>
<dbReference type="GO" id="GO:0003991">
    <property type="term" value="F:acetylglutamate kinase activity"/>
    <property type="evidence" value="ECO:0007669"/>
    <property type="project" value="UniProtKB-UniRule"/>
</dbReference>
<dbReference type="GO" id="GO:0005524">
    <property type="term" value="F:ATP binding"/>
    <property type="evidence" value="ECO:0007669"/>
    <property type="project" value="UniProtKB-UniRule"/>
</dbReference>
<dbReference type="GO" id="GO:0042450">
    <property type="term" value="P:arginine biosynthetic process via ornithine"/>
    <property type="evidence" value="ECO:0007669"/>
    <property type="project" value="UniProtKB-UniRule"/>
</dbReference>
<dbReference type="GO" id="GO:0006526">
    <property type="term" value="P:L-arginine biosynthetic process"/>
    <property type="evidence" value="ECO:0007669"/>
    <property type="project" value="UniProtKB-UniPathway"/>
</dbReference>
<dbReference type="CDD" id="cd04250">
    <property type="entry name" value="AAK_NAGK-C"/>
    <property type="match status" value="1"/>
</dbReference>
<dbReference type="FunFam" id="3.40.1160.10:FF:000004">
    <property type="entry name" value="Acetylglutamate kinase"/>
    <property type="match status" value="1"/>
</dbReference>
<dbReference type="Gene3D" id="3.40.1160.10">
    <property type="entry name" value="Acetylglutamate kinase-like"/>
    <property type="match status" value="1"/>
</dbReference>
<dbReference type="HAMAP" id="MF_00082">
    <property type="entry name" value="ArgB"/>
    <property type="match status" value="1"/>
</dbReference>
<dbReference type="InterPro" id="IPR036393">
    <property type="entry name" value="AceGlu_kinase-like_sf"/>
</dbReference>
<dbReference type="InterPro" id="IPR004662">
    <property type="entry name" value="AcgluKinase_fam"/>
</dbReference>
<dbReference type="InterPro" id="IPR037528">
    <property type="entry name" value="ArgB"/>
</dbReference>
<dbReference type="InterPro" id="IPR001048">
    <property type="entry name" value="Asp/Glu/Uridylate_kinase"/>
</dbReference>
<dbReference type="InterPro" id="IPR001057">
    <property type="entry name" value="Glu/AcGlu_kinase"/>
</dbReference>
<dbReference type="InterPro" id="IPR041727">
    <property type="entry name" value="NAGK-C"/>
</dbReference>
<dbReference type="NCBIfam" id="TIGR00761">
    <property type="entry name" value="argB"/>
    <property type="match status" value="1"/>
</dbReference>
<dbReference type="PANTHER" id="PTHR23342">
    <property type="entry name" value="N-ACETYLGLUTAMATE SYNTHASE"/>
    <property type="match status" value="1"/>
</dbReference>
<dbReference type="PANTHER" id="PTHR23342:SF0">
    <property type="entry name" value="N-ACETYLGLUTAMATE SYNTHASE, MITOCHONDRIAL"/>
    <property type="match status" value="1"/>
</dbReference>
<dbReference type="Pfam" id="PF00696">
    <property type="entry name" value="AA_kinase"/>
    <property type="match status" value="1"/>
</dbReference>
<dbReference type="PIRSF" id="PIRSF000728">
    <property type="entry name" value="NAGK"/>
    <property type="match status" value="1"/>
</dbReference>
<dbReference type="PRINTS" id="PR00474">
    <property type="entry name" value="GLU5KINASE"/>
</dbReference>
<dbReference type="SUPFAM" id="SSF53633">
    <property type="entry name" value="Carbamate kinase-like"/>
    <property type="match status" value="1"/>
</dbReference>
<comment type="function">
    <text evidence="1">Catalyzes the ATP-dependent phosphorylation of N-acetyl-L-glutamate.</text>
</comment>
<comment type="catalytic activity">
    <reaction evidence="1">
        <text>N-acetyl-L-glutamate + ATP = N-acetyl-L-glutamyl 5-phosphate + ADP</text>
        <dbReference type="Rhea" id="RHEA:14629"/>
        <dbReference type="ChEBI" id="CHEBI:30616"/>
        <dbReference type="ChEBI" id="CHEBI:44337"/>
        <dbReference type="ChEBI" id="CHEBI:57936"/>
        <dbReference type="ChEBI" id="CHEBI:456216"/>
        <dbReference type="EC" id="2.7.2.8"/>
    </reaction>
</comment>
<comment type="pathway">
    <text evidence="1">Amino-acid biosynthesis; L-arginine biosynthesis; N(2)-acetyl-L-ornithine from L-glutamate: step 2/4.</text>
</comment>
<comment type="subcellular location">
    <subcellularLocation>
        <location evidence="1">Cytoplasm</location>
    </subcellularLocation>
</comment>
<comment type="similarity">
    <text evidence="1">Belongs to the acetylglutamate kinase family. ArgB subfamily.</text>
</comment>
<evidence type="ECO:0000255" key="1">
    <source>
        <dbReference type="HAMAP-Rule" id="MF_00082"/>
    </source>
</evidence>
<feature type="chain" id="PRO_0000264771" description="Acetylglutamate kinase">
    <location>
        <begin position="1"/>
        <end position="293"/>
    </location>
</feature>
<feature type="binding site" evidence="1">
    <location>
        <begin position="70"/>
        <end position="71"/>
    </location>
    <ligand>
        <name>substrate</name>
    </ligand>
</feature>
<feature type="binding site" evidence="1">
    <location>
        <position position="92"/>
    </location>
    <ligand>
        <name>substrate</name>
    </ligand>
</feature>
<feature type="binding site" evidence="1">
    <location>
        <position position="186"/>
    </location>
    <ligand>
        <name>substrate</name>
    </ligand>
</feature>
<feature type="site" description="Transition state stabilizer" evidence="1">
    <location>
        <position position="35"/>
    </location>
</feature>
<feature type="site" description="Transition state stabilizer" evidence="1">
    <location>
        <position position="249"/>
    </location>
</feature>
<proteinExistence type="inferred from homology"/>
<name>ARGB_SYNSC</name>
<reference key="1">
    <citation type="submission" date="2005-07" db="EMBL/GenBank/DDBJ databases">
        <title>Complete sequence of Synechococcus sp. CC9605.</title>
        <authorList>
            <consortium name="US DOE Joint Genome Institute"/>
            <person name="Copeland A."/>
            <person name="Lucas S."/>
            <person name="Lapidus A."/>
            <person name="Barry K."/>
            <person name="Detter J.C."/>
            <person name="Glavina T."/>
            <person name="Hammon N."/>
            <person name="Israni S."/>
            <person name="Pitluck S."/>
            <person name="Schmutz J."/>
            <person name="Martinez M."/>
            <person name="Larimer F."/>
            <person name="Land M."/>
            <person name="Kyrpides N."/>
            <person name="Ivanova N."/>
            <person name="Richardson P."/>
        </authorList>
    </citation>
    <scope>NUCLEOTIDE SEQUENCE [LARGE SCALE GENOMIC DNA]</scope>
    <source>
        <strain>CC9605</strain>
    </source>
</reference>
<sequence>MAQSTQHNDDALRVSVLSEALPYIQSFAGRRIVIKYGGAAMAHAELRSAVFRDLALLACVGVRPVVVHGGGPEINQWLQRLEIPAEFRDGLRVTDADTMDVVEMVLVGRVNKQIVNGLNQLGTRAVGLSGSDGSLVEARPWGNGSHGLVGDVARVNPDVLEPLLEKGYVPVISSVAATPDDGRAHNINADTVAGELAAALEAEKLILLTDTPGILEDRDDPDSLIRKLRLSEARQLIEDGVVAGGMTPKTECCIRALAQGVSAAHIIDGRVPHALLLEVFTDAGIGTMVVGRS</sequence>